<dbReference type="EMBL" id="CP000867">
    <property type="protein sequence ID" value="ABX02115.1"/>
    <property type="molecule type" value="Genomic_DNA"/>
</dbReference>
<dbReference type="SMR" id="A9A9U2"/>
<dbReference type="STRING" id="444158.MmarC6_1302"/>
<dbReference type="KEGG" id="mmx:MmarC6_1302"/>
<dbReference type="eggNOG" id="arCOG01758">
    <property type="taxonomic scope" value="Archaea"/>
</dbReference>
<dbReference type="HOGENOM" id="CLU_122625_0_1_2"/>
<dbReference type="OrthoDB" id="371736at2157"/>
<dbReference type="PhylomeDB" id="A9A9U2"/>
<dbReference type="GO" id="GO:0015935">
    <property type="term" value="C:small ribosomal subunit"/>
    <property type="evidence" value="ECO:0007669"/>
    <property type="project" value="InterPro"/>
</dbReference>
<dbReference type="GO" id="GO:0003735">
    <property type="term" value="F:structural constituent of ribosome"/>
    <property type="evidence" value="ECO:0007669"/>
    <property type="project" value="InterPro"/>
</dbReference>
<dbReference type="GO" id="GO:0000049">
    <property type="term" value="F:tRNA binding"/>
    <property type="evidence" value="ECO:0007669"/>
    <property type="project" value="UniProtKB-UniRule"/>
</dbReference>
<dbReference type="GO" id="GO:0006412">
    <property type="term" value="P:translation"/>
    <property type="evidence" value="ECO:0007669"/>
    <property type="project" value="UniProtKB-UniRule"/>
</dbReference>
<dbReference type="FunFam" id="3.30.70.600:FF:000004">
    <property type="entry name" value="30S ribosomal protein S10"/>
    <property type="match status" value="1"/>
</dbReference>
<dbReference type="Gene3D" id="3.30.70.600">
    <property type="entry name" value="Ribosomal protein S10 domain"/>
    <property type="match status" value="1"/>
</dbReference>
<dbReference type="HAMAP" id="MF_00508">
    <property type="entry name" value="Ribosomal_uS10"/>
    <property type="match status" value="1"/>
</dbReference>
<dbReference type="InterPro" id="IPR001848">
    <property type="entry name" value="Ribosomal_uS10"/>
</dbReference>
<dbReference type="InterPro" id="IPR018268">
    <property type="entry name" value="Ribosomal_uS10_CS"/>
</dbReference>
<dbReference type="InterPro" id="IPR027486">
    <property type="entry name" value="Ribosomal_uS10_dom"/>
</dbReference>
<dbReference type="InterPro" id="IPR036838">
    <property type="entry name" value="Ribosomal_uS10_dom_sf"/>
</dbReference>
<dbReference type="InterPro" id="IPR005729">
    <property type="entry name" value="Ribosomal_uS10_euk/arc"/>
</dbReference>
<dbReference type="NCBIfam" id="TIGR01046">
    <property type="entry name" value="uS10_euk_arch"/>
    <property type="match status" value="1"/>
</dbReference>
<dbReference type="PANTHER" id="PTHR11700">
    <property type="entry name" value="30S RIBOSOMAL PROTEIN S10 FAMILY MEMBER"/>
    <property type="match status" value="1"/>
</dbReference>
<dbReference type="Pfam" id="PF00338">
    <property type="entry name" value="Ribosomal_S10"/>
    <property type="match status" value="1"/>
</dbReference>
<dbReference type="PRINTS" id="PR00971">
    <property type="entry name" value="RIBOSOMALS10"/>
</dbReference>
<dbReference type="SMART" id="SM01403">
    <property type="entry name" value="Ribosomal_S10"/>
    <property type="match status" value="1"/>
</dbReference>
<dbReference type="SUPFAM" id="SSF54999">
    <property type="entry name" value="Ribosomal protein S10"/>
    <property type="match status" value="1"/>
</dbReference>
<dbReference type="PROSITE" id="PS00361">
    <property type="entry name" value="RIBOSOMAL_S10"/>
    <property type="match status" value="1"/>
</dbReference>
<feature type="chain" id="PRO_1000127149" description="Small ribosomal subunit protein uS10">
    <location>
        <begin position="1"/>
        <end position="102"/>
    </location>
</feature>
<organism>
    <name type="scientific">Methanococcus maripaludis (strain C6 / ATCC BAA-1332)</name>
    <dbReference type="NCBI Taxonomy" id="444158"/>
    <lineage>
        <taxon>Archaea</taxon>
        <taxon>Methanobacteriati</taxon>
        <taxon>Methanobacteriota</taxon>
        <taxon>Methanomada group</taxon>
        <taxon>Methanococci</taxon>
        <taxon>Methanococcales</taxon>
        <taxon>Methanococcaceae</taxon>
        <taxon>Methanococcus</taxon>
    </lineage>
</organism>
<evidence type="ECO:0000255" key="1">
    <source>
        <dbReference type="HAMAP-Rule" id="MF_00508"/>
    </source>
</evidence>
<evidence type="ECO:0000305" key="2"/>
<proteinExistence type="inferred from homology"/>
<protein>
    <recommendedName>
        <fullName evidence="1">Small ribosomal subunit protein uS10</fullName>
    </recommendedName>
    <alternativeName>
        <fullName evidence="2">30S ribosomal protein S10</fullName>
    </alternativeName>
</protein>
<reference key="1">
    <citation type="submission" date="2007-10" db="EMBL/GenBank/DDBJ databases">
        <title>Complete sequence of Methanococcus maripaludis C6.</title>
        <authorList>
            <consortium name="US DOE Joint Genome Institute"/>
            <person name="Copeland A."/>
            <person name="Lucas S."/>
            <person name="Lapidus A."/>
            <person name="Barry K."/>
            <person name="Glavina del Rio T."/>
            <person name="Dalin E."/>
            <person name="Tice H."/>
            <person name="Pitluck S."/>
            <person name="Clum A."/>
            <person name="Schmutz J."/>
            <person name="Larimer F."/>
            <person name="Land M."/>
            <person name="Hauser L."/>
            <person name="Kyrpides N."/>
            <person name="Mikhailova N."/>
            <person name="Sieprawska-Lupa M."/>
            <person name="Whitman W.B."/>
            <person name="Richardson P."/>
        </authorList>
    </citation>
    <scope>NUCLEOTIDE SEQUENCE [LARGE SCALE GENOMIC DNA]</scope>
    <source>
        <strain>C6 / ATCC BAA-1332</strain>
    </source>
</reference>
<sequence>MQKARIKLSSTQHVELDGVCDQIKAIAEKTGVDMAGPIPLPTKALKVTTRKSTDGEGSSSFDRWTMRVHKRVIDIEADERTMKHIMKVRIPDTVQIEIELRN</sequence>
<accession>A9A9U2</accession>
<keyword id="KW-0687">Ribonucleoprotein</keyword>
<keyword id="KW-0689">Ribosomal protein</keyword>
<gene>
    <name evidence="1" type="primary">rps10</name>
    <name type="ordered locus">MmarC6_1302</name>
</gene>
<comment type="function">
    <text evidence="1">Involved in the binding of tRNA to the ribosomes.</text>
</comment>
<comment type="subunit">
    <text evidence="1">Part of the 30S ribosomal subunit.</text>
</comment>
<comment type="similarity">
    <text evidence="1">Belongs to the universal ribosomal protein uS10 family.</text>
</comment>
<name>RS10_METM6</name>